<dbReference type="EC" id="3.4.-.-"/>
<dbReference type="EMBL" id="AJ938182">
    <property type="protein sequence ID" value="CAI81256.1"/>
    <property type="status" value="ALT_INIT"/>
    <property type="molecule type" value="Genomic_DNA"/>
</dbReference>
<dbReference type="RefSeq" id="WP_000161678.1">
    <property type="nucleotide sequence ID" value="NC_007622.1"/>
</dbReference>
<dbReference type="SMR" id="Q2YTD2"/>
<dbReference type="KEGG" id="sab:SAB1567"/>
<dbReference type="HOGENOM" id="CLU_017266_4_2_9"/>
<dbReference type="GO" id="GO:0016787">
    <property type="term" value="F:hydrolase activity"/>
    <property type="evidence" value="ECO:0007669"/>
    <property type="project" value="UniProtKB-KW"/>
</dbReference>
<dbReference type="GO" id="GO:0046872">
    <property type="term" value="F:metal ion binding"/>
    <property type="evidence" value="ECO:0007669"/>
    <property type="project" value="UniProtKB-KW"/>
</dbReference>
<dbReference type="CDD" id="cd01092">
    <property type="entry name" value="APP-like"/>
    <property type="match status" value="1"/>
</dbReference>
<dbReference type="FunFam" id="3.90.230.10:FF:000014">
    <property type="entry name" value="Aminopeptidase P family protein"/>
    <property type="match status" value="1"/>
</dbReference>
<dbReference type="Gene3D" id="3.90.230.10">
    <property type="entry name" value="Creatinase/methionine aminopeptidase superfamily"/>
    <property type="match status" value="1"/>
</dbReference>
<dbReference type="Gene3D" id="3.40.350.10">
    <property type="entry name" value="Creatinase/prolidase N-terminal domain"/>
    <property type="match status" value="1"/>
</dbReference>
<dbReference type="InterPro" id="IPR029149">
    <property type="entry name" value="Creatin/AminoP/Spt16_N"/>
</dbReference>
<dbReference type="InterPro" id="IPR036005">
    <property type="entry name" value="Creatinase/aminopeptidase-like"/>
</dbReference>
<dbReference type="InterPro" id="IPR000587">
    <property type="entry name" value="Creatinase_N"/>
</dbReference>
<dbReference type="InterPro" id="IPR000994">
    <property type="entry name" value="Pept_M24"/>
</dbReference>
<dbReference type="InterPro" id="IPR050659">
    <property type="entry name" value="Peptidase_M24B"/>
</dbReference>
<dbReference type="InterPro" id="IPR001131">
    <property type="entry name" value="Peptidase_M24B_aminopep-P_CS"/>
</dbReference>
<dbReference type="PANTHER" id="PTHR46112">
    <property type="entry name" value="AMINOPEPTIDASE"/>
    <property type="match status" value="1"/>
</dbReference>
<dbReference type="PANTHER" id="PTHR46112:SF10">
    <property type="entry name" value="DIPEPTIDASE YKVY-RELATED"/>
    <property type="match status" value="1"/>
</dbReference>
<dbReference type="Pfam" id="PF01321">
    <property type="entry name" value="Creatinase_N"/>
    <property type="match status" value="1"/>
</dbReference>
<dbReference type="Pfam" id="PF00557">
    <property type="entry name" value="Peptidase_M24"/>
    <property type="match status" value="1"/>
</dbReference>
<dbReference type="SUPFAM" id="SSF55920">
    <property type="entry name" value="Creatinase/aminopeptidase"/>
    <property type="match status" value="1"/>
</dbReference>
<dbReference type="SUPFAM" id="SSF53092">
    <property type="entry name" value="Creatinase/prolidase N-terminal domain"/>
    <property type="match status" value="1"/>
</dbReference>
<dbReference type="PROSITE" id="PS00491">
    <property type="entry name" value="PROLINE_PEPTIDASE"/>
    <property type="match status" value="1"/>
</dbReference>
<feature type="chain" id="PRO_0000299421" description="Uncharacterized peptidase SAB1567">
    <location>
        <begin position="1"/>
        <end position="351"/>
    </location>
</feature>
<feature type="binding site" evidence="1">
    <location>
        <position position="215"/>
    </location>
    <ligand>
        <name>Mn(2+)</name>
        <dbReference type="ChEBI" id="CHEBI:29035"/>
        <label>2</label>
    </ligand>
</feature>
<feature type="binding site" evidence="1">
    <location>
        <position position="226"/>
    </location>
    <ligand>
        <name>Mn(2+)</name>
        <dbReference type="ChEBI" id="CHEBI:29035"/>
        <label>1</label>
    </ligand>
</feature>
<feature type="binding site" evidence="1">
    <location>
        <position position="226"/>
    </location>
    <ligand>
        <name>Mn(2+)</name>
        <dbReference type="ChEBI" id="CHEBI:29035"/>
        <label>2</label>
    </ligand>
</feature>
<feature type="binding site" evidence="1">
    <location>
        <position position="290"/>
    </location>
    <ligand>
        <name>Mn(2+)</name>
        <dbReference type="ChEBI" id="CHEBI:29035"/>
        <label>1</label>
    </ligand>
</feature>
<feature type="binding site" evidence="1">
    <location>
        <position position="319"/>
    </location>
    <ligand>
        <name>Mn(2+)</name>
        <dbReference type="ChEBI" id="CHEBI:29035"/>
        <label>1</label>
    </ligand>
</feature>
<feature type="binding site" evidence="1">
    <location>
        <position position="333"/>
    </location>
    <ligand>
        <name>Mn(2+)</name>
        <dbReference type="ChEBI" id="CHEBI:29035"/>
        <label>1</label>
    </ligand>
</feature>
<feature type="binding site" evidence="1">
    <location>
        <position position="333"/>
    </location>
    <ligand>
        <name>Mn(2+)</name>
        <dbReference type="ChEBI" id="CHEBI:29035"/>
        <label>2</label>
    </ligand>
</feature>
<sequence>MTKISKIIDELNNQQADAAWITTPLNVYYFTGYRSEPHERLFALLIKKDGKQVLFCPKMEVEEVKASSFTGEIVGYLDTENPFSLYPQTINKLLIESEHLTVARQKQLISGFNVNSFGDVDLTIKQLRNIKSEDEISKIRKAAELADKCIEIGVSYLKEGVTEREVVNHIEQTIKQYGVNEMSFDTMVLFGDHAASPHGTPGDRRLKSNEYVLFDLGVIYEHYCSDMTRTIKFGEPNKEAQEIYNIVLEAETSAIQAIKPGIPLKDIDHIARNIISEKGYGEYFPHRLGHGLGLQEHEYQDVSSTNSNLLEAGMVITIEPGIYVPGVAGVRIEDDILVTNEGYEVLTHYEK</sequence>
<accession>Q2YTD2</accession>
<gene>
    <name type="ordered locus">SAB1567</name>
</gene>
<keyword id="KW-0378">Hydrolase</keyword>
<keyword id="KW-0464">Manganese</keyword>
<keyword id="KW-0479">Metal-binding</keyword>
<organism>
    <name type="scientific">Staphylococcus aureus (strain bovine RF122 / ET3-1)</name>
    <dbReference type="NCBI Taxonomy" id="273036"/>
    <lineage>
        <taxon>Bacteria</taxon>
        <taxon>Bacillati</taxon>
        <taxon>Bacillota</taxon>
        <taxon>Bacilli</taxon>
        <taxon>Bacillales</taxon>
        <taxon>Staphylococcaceae</taxon>
        <taxon>Staphylococcus</taxon>
    </lineage>
</organism>
<reference key="1">
    <citation type="journal article" date="2007" name="PLoS ONE">
        <title>Molecular correlates of host specialization in Staphylococcus aureus.</title>
        <authorList>
            <person name="Herron-Olson L."/>
            <person name="Fitzgerald J.R."/>
            <person name="Musser J.M."/>
            <person name="Kapur V."/>
        </authorList>
    </citation>
    <scope>NUCLEOTIDE SEQUENCE [LARGE SCALE GENOMIC DNA]</scope>
    <source>
        <strain>bovine RF122 / ET3-1</strain>
    </source>
</reference>
<comment type="cofactor">
    <cofactor evidence="2">
        <name>Mn(2+)</name>
        <dbReference type="ChEBI" id="CHEBI:29035"/>
    </cofactor>
    <text evidence="2">Binds 2 manganese ions per subunit.</text>
</comment>
<comment type="similarity">
    <text evidence="2">Belongs to the peptidase M24B family.</text>
</comment>
<comment type="sequence caution" evidence="2">
    <conflict type="erroneous initiation">
        <sequence resource="EMBL-CDS" id="CAI81256"/>
    </conflict>
</comment>
<evidence type="ECO:0000255" key="1"/>
<evidence type="ECO:0000305" key="2"/>
<name>Y1567_STAAB</name>
<proteinExistence type="inferred from homology"/>
<protein>
    <recommendedName>
        <fullName>Uncharacterized peptidase SAB1567</fullName>
        <ecNumber>3.4.-.-</ecNumber>
    </recommendedName>
</protein>